<name>FMP46_KLULA</name>
<proteinExistence type="inferred from homology"/>
<reference key="1">
    <citation type="journal article" date="2004" name="Nature">
        <title>Genome evolution in yeasts.</title>
        <authorList>
            <person name="Dujon B."/>
            <person name="Sherman D."/>
            <person name="Fischer G."/>
            <person name="Durrens P."/>
            <person name="Casaregola S."/>
            <person name="Lafontaine I."/>
            <person name="de Montigny J."/>
            <person name="Marck C."/>
            <person name="Neuveglise C."/>
            <person name="Talla E."/>
            <person name="Goffard N."/>
            <person name="Frangeul L."/>
            <person name="Aigle M."/>
            <person name="Anthouard V."/>
            <person name="Babour A."/>
            <person name="Barbe V."/>
            <person name="Barnay S."/>
            <person name="Blanchin S."/>
            <person name="Beckerich J.-M."/>
            <person name="Beyne E."/>
            <person name="Bleykasten C."/>
            <person name="Boisrame A."/>
            <person name="Boyer J."/>
            <person name="Cattolico L."/>
            <person name="Confanioleri F."/>
            <person name="de Daruvar A."/>
            <person name="Despons L."/>
            <person name="Fabre E."/>
            <person name="Fairhead C."/>
            <person name="Ferry-Dumazet H."/>
            <person name="Groppi A."/>
            <person name="Hantraye F."/>
            <person name="Hennequin C."/>
            <person name="Jauniaux N."/>
            <person name="Joyet P."/>
            <person name="Kachouri R."/>
            <person name="Kerrest A."/>
            <person name="Koszul R."/>
            <person name="Lemaire M."/>
            <person name="Lesur I."/>
            <person name="Ma L."/>
            <person name="Muller H."/>
            <person name="Nicaud J.-M."/>
            <person name="Nikolski M."/>
            <person name="Oztas S."/>
            <person name="Ozier-Kalogeropoulos O."/>
            <person name="Pellenz S."/>
            <person name="Potier S."/>
            <person name="Richard G.-F."/>
            <person name="Straub M.-L."/>
            <person name="Suleau A."/>
            <person name="Swennen D."/>
            <person name="Tekaia F."/>
            <person name="Wesolowski-Louvel M."/>
            <person name="Westhof E."/>
            <person name="Wirth B."/>
            <person name="Zeniou-Meyer M."/>
            <person name="Zivanovic Y."/>
            <person name="Bolotin-Fukuhara M."/>
            <person name="Thierry A."/>
            <person name="Bouchier C."/>
            <person name="Caudron B."/>
            <person name="Scarpelli C."/>
            <person name="Gaillardin C."/>
            <person name="Weissenbach J."/>
            <person name="Wincker P."/>
            <person name="Souciet J.-L."/>
        </authorList>
    </citation>
    <scope>NUCLEOTIDE SEQUENCE [LARGE SCALE GENOMIC DNA]</scope>
    <source>
        <strain>ATCC 8585 / CBS 2359 / DSM 70799 / NBRC 1267 / NRRL Y-1140 / WM37</strain>
    </source>
</reference>
<accession>Q6CN57</accession>
<feature type="transit peptide" description="Mitochondrion" evidence="2">
    <location>
        <begin position="1"/>
        <end position="21"/>
    </location>
</feature>
<feature type="chain" id="PRO_0000292448" description="Putative redox protein FMP46, mitochondrial">
    <location>
        <begin position="22"/>
        <end position="129"/>
    </location>
</feature>
<feature type="active site" evidence="3">
    <location>
        <position position="93"/>
    </location>
</feature>
<comment type="function">
    <text evidence="1">Putative mitochondrial redox protein which could be involved in the reduction of small toxic molecules.</text>
</comment>
<comment type="subcellular location">
    <subcellularLocation>
        <location evidence="1">Mitochondrion</location>
    </subcellularLocation>
</comment>
<comment type="similarity">
    <text evidence="3">Belongs to the FMP46 family.</text>
</comment>
<keyword id="KW-0496">Mitochondrion</keyword>
<keyword id="KW-0560">Oxidoreductase</keyword>
<keyword id="KW-1185">Reference proteome</keyword>
<keyword id="KW-0809">Transit peptide</keyword>
<evidence type="ECO:0000250" key="1"/>
<evidence type="ECO:0000255" key="2"/>
<evidence type="ECO:0000305" key="3"/>
<sequence>MSMFKTIQFQPRVVTLFTHKLESSHAQNLLTALKSNHKNKINIEICQKFPTRDQLEYLAKIDKPDLMEQIPKTESLLKKAAEDPLFGSPLQKCVENGSWNKQTSLWVDWEKAVLGTTVQSLKEKWLPKN</sequence>
<gene>
    <name type="primary">FMP46</name>
    <name type="ordered locus">KLLA0E15202g</name>
</gene>
<dbReference type="EC" id="1.-.-.-"/>
<dbReference type="EMBL" id="CR382125">
    <property type="protein sequence ID" value="CAG99719.1"/>
    <property type="molecule type" value="Genomic_DNA"/>
</dbReference>
<dbReference type="RefSeq" id="XP_454632.1">
    <property type="nucleotide sequence ID" value="XM_454632.1"/>
</dbReference>
<dbReference type="SMR" id="Q6CN57"/>
<dbReference type="FunCoup" id="Q6CN57">
    <property type="interactions" value="74"/>
</dbReference>
<dbReference type="STRING" id="284590.Q6CN57"/>
<dbReference type="PaxDb" id="284590-Q6CN57"/>
<dbReference type="KEGG" id="kla:KLLA0_E15137g"/>
<dbReference type="eggNOG" id="ENOG502S4SU">
    <property type="taxonomic scope" value="Eukaryota"/>
</dbReference>
<dbReference type="HOGENOM" id="CLU_1939538_0_0_1"/>
<dbReference type="InParanoid" id="Q6CN57"/>
<dbReference type="OMA" id="LWVDWEK"/>
<dbReference type="Proteomes" id="UP000000598">
    <property type="component" value="Chromosome E"/>
</dbReference>
<dbReference type="GO" id="GO:0005739">
    <property type="term" value="C:mitochondrion"/>
    <property type="evidence" value="ECO:0007669"/>
    <property type="project" value="UniProtKB-SubCell"/>
</dbReference>
<dbReference type="GO" id="GO:0016491">
    <property type="term" value="F:oxidoreductase activity"/>
    <property type="evidence" value="ECO:0007669"/>
    <property type="project" value="UniProtKB-KW"/>
</dbReference>
<dbReference type="Gene3D" id="3.40.30.10">
    <property type="entry name" value="Glutaredoxin"/>
    <property type="match status" value="1"/>
</dbReference>
<dbReference type="InterPro" id="IPR012882">
    <property type="entry name" value="Fmp46"/>
</dbReference>
<dbReference type="InterPro" id="IPR036249">
    <property type="entry name" value="Thioredoxin-like_sf"/>
</dbReference>
<dbReference type="PANTHER" id="PTHR28071">
    <property type="entry name" value="REDOX PROTEIN FMP46, MITOCHONDRIAL-RELATED"/>
    <property type="match status" value="1"/>
</dbReference>
<dbReference type="PANTHER" id="PTHR28071:SF1">
    <property type="entry name" value="REDOX PROTEIN FMP46, MITOCHONDRIAL-RELATED"/>
    <property type="match status" value="1"/>
</dbReference>
<dbReference type="Pfam" id="PF07955">
    <property type="entry name" value="DUF1687"/>
    <property type="match status" value="1"/>
</dbReference>
<dbReference type="SUPFAM" id="SSF52833">
    <property type="entry name" value="Thioredoxin-like"/>
    <property type="match status" value="1"/>
</dbReference>
<protein>
    <recommendedName>
        <fullName>Putative redox protein FMP46, mitochondrial</fullName>
        <ecNumber>1.-.-.-</ecNumber>
    </recommendedName>
</protein>
<organism>
    <name type="scientific">Kluyveromyces lactis (strain ATCC 8585 / CBS 2359 / DSM 70799 / NBRC 1267 / NRRL Y-1140 / WM37)</name>
    <name type="common">Yeast</name>
    <name type="synonym">Candida sphaerica</name>
    <dbReference type="NCBI Taxonomy" id="284590"/>
    <lineage>
        <taxon>Eukaryota</taxon>
        <taxon>Fungi</taxon>
        <taxon>Dikarya</taxon>
        <taxon>Ascomycota</taxon>
        <taxon>Saccharomycotina</taxon>
        <taxon>Saccharomycetes</taxon>
        <taxon>Saccharomycetales</taxon>
        <taxon>Saccharomycetaceae</taxon>
        <taxon>Kluyveromyces</taxon>
    </lineage>
</organism>